<sequence length="505" mass="60450">MEEYPRYLELDRSRKNDFLFPLIYREYIYRLSHDHGLNRSILLENEGHNNKFSLVIIKRLITRIYQQNHLIISANDSNQNPFLRYNKNLYLQMISEGFAVIVEILFCLQLVSSLEESEIVKSHNLRSIHSLFPFLEDKFPHLNYVSDVLVPYPIHLEKLIQTLRYWVKDPSSLHLFRLVVHEEWNWNSLIISKKSISIFPKSNPRFFFFLYNIYVYEYESIFFFLRNQSFYLRSTFSWVLLERIYFYGKLEQFTDVFANDFPSVLCLFKDPFMHYVRYQGKLILASKYTPLLMKKWKYYLVNLGQCHFYVWFQPEKIYINLLSKHSLDFLGYLSRYRLNPSVVRSQMFENSFIIDNAMKKLDTIVPIIPLIGSLAQTNFCNEIGYPVSNPTRAANSSDSDIIARFLRLCRNLFHYYSGSSKKKSLYRLKYILRLSCVKTLACKHKSTVRFFLKRLGSEFLEEFLTEEARVLSLIFPRVSYISRTLYRGKVWYLDIICINDLSNHK</sequence>
<name>MATK_RHISY</name>
<geneLocation type="chloroplast"/>
<evidence type="ECO:0000255" key="1">
    <source>
        <dbReference type="HAMAP-Rule" id="MF_01390"/>
    </source>
</evidence>
<organism>
    <name type="scientific">Rhizophora stylosa</name>
    <name type="common">Bakau</name>
    <name type="synonym">Red mangrove</name>
    <dbReference type="NCBI Taxonomy" id="98588"/>
    <lineage>
        <taxon>Eukaryota</taxon>
        <taxon>Viridiplantae</taxon>
        <taxon>Streptophyta</taxon>
        <taxon>Embryophyta</taxon>
        <taxon>Tracheophyta</taxon>
        <taxon>Spermatophyta</taxon>
        <taxon>Magnoliopsida</taxon>
        <taxon>eudicotyledons</taxon>
        <taxon>Gunneridae</taxon>
        <taxon>Pentapetalae</taxon>
        <taxon>rosids</taxon>
        <taxon>fabids</taxon>
        <taxon>Malpighiales</taxon>
        <taxon>Rhizophoraceae</taxon>
        <taxon>Rhizophora</taxon>
    </lineage>
</organism>
<protein>
    <recommendedName>
        <fullName evidence="1">Maturase K</fullName>
    </recommendedName>
    <alternativeName>
        <fullName evidence="1">Intron maturase</fullName>
    </alternativeName>
</protein>
<feature type="chain" id="PRO_0000143675" description="Maturase K">
    <location>
        <begin position="1"/>
        <end position="505"/>
    </location>
</feature>
<reference key="1">
    <citation type="submission" date="2000-12" db="EMBL/GenBank/DDBJ databases">
        <title>Molecular phylogenies, evolution, and biogeography of Rhizophoraceae in China.</title>
        <authorList>
            <person name="Shi S."/>
            <person name="Zhong Y."/>
            <person name="Huang Y."/>
            <person name="Chang H."/>
        </authorList>
    </citation>
    <scope>NUCLEOTIDE SEQUENCE [GENOMIC DNA]</scope>
</reference>
<comment type="function">
    <text evidence="1">Usually encoded in the trnK tRNA gene intron. Probably assists in splicing its own and other chloroplast group II introns.</text>
</comment>
<comment type="subcellular location">
    <subcellularLocation>
        <location>Plastid</location>
        <location>Chloroplast</location>
    </subcellularLocation>
</comment>
<comment type="similarity">
    <text evidence="1">Belongs to the intron maturase 2 family. MatK subfamily.</text>
</comment>
<dbReference type="EMBL" id="AF105092">
    <property type="protein sequence ID" value="AAG35559.2"/>
    <property type="molecule type" value="Genomic_DNA"/>
</dbReference>
<dbReference type="GO" id="GO:0009507">
    <property type="term" value="C:chloroplast"/>
    <property type="evidence" value="ECO:0007669"/>
    <property type="project" value="UniProtKB-SubCell"/>
</dbReference>
<dbReference type="GO" id="GO:0003723">
    <property type="term" value="F:RNA binding"/>
    <property type="evidence" value="ECO:0007669"/>
    <property type="project" value="UniProtKB-KW"/>
</dbReference>
<dbReference type="GO" id="GO:0006397">
    <property type="term" value="P:mRNA processing"/>
    <property type="evidence" value="ECO:0007669"/>
    <property type="project" value="UniProtKB-KW"/>
</dbReference>
<dbReference type="GO" id="GO:0008380">
    <property type="term" value="P:RNA splicing"/>
    <property type="evidence" value="ECO:0007669"/>
    <property type="project" value="UniProtKB-UniRule"/>
</dbReference>
<dbReference type="GO" id="GO:0008033">
    <property type="term" value="P:tRNA processing"/>
    <property type="evidence" value="ECO:0007669"/>
    <property type="project" value="UniProtKB-KW"/>
</dbReference>
<dbReference type="HAMAP" id="MF_01390">
    <property type="entry name" value="MatK"/>
    <property type="match status" value="1"/>
</dbReference>
<dbReference type="InterPro" id="IPR024937">
    <property type="entry name" value="Domain_X"/>
</dbReference>
<dbReference type="InterPro" id="IPR002866">
    <property type="entry name" value="Maturase_MatK"/>
</dbReference>
<dbReference type="InterPro" id="IPR024942">
    <property type="entry name" value="Maturase_MatK_N"/>
</dbReference>
<dbReference type="PANTHER" id="PTHR34811">
    <property type="entry name" value="MATURASE K"/>
    <property type="match status" value="1"/>
</dbReference>
<dbReference type="PANTHER" id="PTHR34811:SF1">
    <property type="entry name" value="MATURASE K"/>
    <property type="match status" value="1"/>
</dbReference>
<dbReference type="Pfam" id="PF01348">
    <property type="entry name" value="Intron_maturas2"/>
    <property type="match status" value="1"/>
</dbReference>
<dbReference type="Pfam" id="PF01824">
    <property type="entry name" value="MatK_N"/>
    <property type="match status" value="1"/>
</dbReference>
<keyword id="KW-0150">Chloroplast</keyword>
<keyword id="KW-0507">mRNA processing</keyword>
<keyword id="KW-0934">Plastid</keyword>
<keyword id="KW-0694">RNA-binding</keyword>
<keyword id="KW-0819">tRNA processing</keyword>
<gene>
    <name evidence="1" type="primary">matK</name>
</gene>
<proteinExistence type="inferred from homology"/>
<accession>Q9GFN8</accession>